<reference key="1">
    <citation type="journal article" date="1994" name="Mol. Endocrinol.">
        <title>TAK1: molecular cloning and characterization of a new member of the nuclear receptor superfamily.</title>
        <authorList>
            <person name="Hirose T."/>
            <person name="Fujimoto W."/>
            <person name="Yamaai T."/>
            <person name="Kim K.H."/>
            <person name="Matsuura H."/>
            <person name="Jetten A.M."/>
        </authorList>
    </citation>
    <scope>NUCLEOTIDE SEQUENCE [MRNA] (ISOFORM 1)</scope>
    <source>
        <tissue>Testis</tissue>
    </source>
</reference>
<reference key="2">
    <citation type="journal article" date="1994" name="Proc. Natl. Acad. Sci. U.S.A.">
        <title>Human and rat TR4 orphan receptors specify a subclass of the steroid receptor superfamily.</title>
        <authorList>
            <person name="Chang C."/>
            <person name="da Silva S.L."/>
            <person name="Ideta R."/>
            <person name="Lee Y."/>
            <person name="Yeh S."/>
            <person name="Burbach J.P."/>
        </authorList>
    </citation>
    <scope>NUCLEOTIDE SEQUENCE [MRNA] (ISOFORM 2)</scope>
    <source>
        <tissue>Prostate</tissue>
        <tissue>Testis</tissue>
    </source>
</reference>
<reference key="3">
    <citation type="journal article" date="2008" name="FEBS Lett.">
        <title>DNA-binding profiling of human hormone nuclear receptors via fluorescence correlation spectroscopy in a cell-free system.</title>
        <authorList>
            <person name="Kobayashi T."/>
            <person name="Kodani Y."/>
            <person name="Nozawa A."/>
            <person name="Endo Y."/>
            <person name="Sawasaki T."/>
        </authorList>
    </citation>
    <scope>NUCLEOTIDE SEQUENCE [MRNA] (ISOFORM 1)</scope>
    <scope>DNA-BINDING SPECIFICITY</scope>
</reference>
<reference key="4">
    <citation type="journal article" date="2004" name="Nat. Genet.">
        <title>Complete sequencing and characterization of 21,243 full-length human cDNAs.</title>
        <authorList>
            <person name="Ota T."/>
            <person name="Suzuki Y."/>
            <person name="Nishikawa T."/>
            <person name="Otsuki T."/>
            <person name="Sugiyama T."/>
            <person name="Irie R."/>
            <person name="Wakamatsu A."/>
            <person name="Hayashi K."/>
            <person name="Sato H."/>
            <person name="Nagai K."/>
            <person name="Kimura K."/>
            <person name="Makita H."/>
            <person name="Sekine M."/>
            <person name="Obayashi M."/>
            <person name="Nishi T."/>
            <person name="Shibahara T."/>
            <person name="Tanaka T."/>
            <person name="Ishii S."/>
            <person name="Yamamoto J."/>
            <person name="Saito K."/>
            <person name="Kawai Y."/>
            <person name="Isono Y."/>
            <person name="Nakamura Y."/>
            <person name="Nagahari K."/>
            <person name="Murakami K."/>
            <person name="Yasuda T."/>
            <person name="Iwayanagi T."/>
            <person name="Wagatsuma M."/>
            <person name="Shiratori A."/>
            <person name="Sudo H."/>
            <person name="Hosoiri T."/>
            <person name="Kaku Y."/>
            <person name="Kodaira H."/>
            <person name="Kondo H."/>
            <person name="Sugawara M."/>
            <person name="Takahashi M."/>
            <person name="Kanda K."/>
            <person name="Yokoi T."/>
            <person name="Furuya T."/>
            <person name="Kikkawa E."/>
            <person name="Omura Y."/>
            <person name="Abe K."/>
            <person name="Kamihara K."/>
            <person name="Katsuta N."/>
            <person name="Sato K."/>
            <person name="Tanikawa M."/>
            <person name="Yamazaki M."/>
            <person name="Ninomiya K."/>
            <person name="Ishibashi T."/>
            <person name="Yamashita H."/>
            <person name="Murakawa K."/>
            <person name="Fujimori K."/>
            <person name="Tanai H."/>
            <person name="Kimata M."/>
            <person name="Watanabe M."/>
            <person name="Hiraoka S."/>
            <person name="Chiba Y."/>
            <person name="Ishida S."/>
            <person name="Ono Y."/>
            <person name="Takiguchi S."/>
            <person name="Watanabe S."/>
            <person name="Yosida M."/>
            <person name="Hotuta T."/>
            <person name="Kusano J."/>
            <person name="Kanehori K."/>
            <person name="Takahashi-Fujii A."/>
            <person name="Hara H."/>
            <person name="Tanase T.-O."/>
            <person name="Nomura Y."/>
            <person name="Togiya S."/>
            <person name="Komai F."/>
            <person name="Hara R."/>
            <person name="Takeuchi K."/>
            <person name="Arita M."/>
            <person name="Imose N."/>
            <person name="Musashino K."/>
            <person name="Yuuki H."/>
            <person name="Oshima A."/>
            <person name="Sasaki N."/>
            <person name="Aotsuka S."/>
            <person name="Yoshikawa Y."/>
            <person name="Matsunawa H."/>
            <person name="Ichihara T."/>
            <person name="Shiohata N."/>
            <person name="Sano S."/>
            <person name="Moriya S."/>
            <person name="Momiyama H."/>
            <person name="Satoh N."/>
            <person name="Takami S."/>
            <person name="Terashima Y."/>
            <person name="Suzuki O."/>
            <person name="Nakagawa S."/>
            <person name="Senoh A."/>
            <person name="Mizoguchi H."/>
            <person name="Goto Y."/>
            <person name="Shimizu F."/>
            <person name="Wakebe H."/>
            <person name="Hishigaki H."/>
            <person name="Watanabe T."/>
            <person name="Sugiyama A."/>
            <person name="Takemoto M."/>
            <person name="Kawakami B."/>
            <person name="Yamazaki M."/>
            <person name="Watanabe K."/>
            <person name="Kumagai A."/>
            <person name="Itakura S."/>
            <person name="Fukuzumi Y."/>
            <person name="Fujimori Y."/>
            <person name="Komiyama M."/>
            <person name="Tashiro H."/>
            <person name="Tanigami A."/>
            <person name="Fujiwara T."/>
            <person name="Ono T."/>
            <person name="Yamada K."/>
            <person name="Fujii Y."/>
            <person name="Ozaki K."/>
            <person name="Hirao M."/>
            <person name="Ohmori Y."/>
            <person name="Kawabata A."/>
            <person name="Hikiji T."/>
            <person name="Kobatake N."/>
            <person name="Inagaki H."/>
            <person name="Ikema Y."/>
            <person name="Okamoto S."/>
            <person name="Okitani R."/>
            <person name="Kawakami T."/>
            <person name="Noguchi S."/>
            <person name="Itoh T."/>
            <person name="Shigeta K."/>
            <person name="Senba T."/>
            <person name="Matsumura K."/>
            <person name="Nakajima Y."/>
            <person name="Mizuno T."/>
            <person name="Morinaga M."/>
            <person name="Sasaki M."/>
            <person name="Togashi T."/>
            <person name="Oyama M."/>
            <person name="Hata H."/>
            <person name="Watanabe M."/>
            <person name="Komatsu T."/>
            <person name="Mizushima-Sugano J."/>
            <person name="Satoh T."/>
            <person name="Shirai Y."/>
            <person name="Takahashi Y."/>
            <person name="Nakagawa K."/>
            <person name="Okumura K."/>
            <person name="Nagase T."/>
            <person name="Nomura N."/>
            <person name="Kikuchi H."/>
            <person name="Masuho Y."/>
            <person name="Yamashita R."/>
            <person name="Nakai K."/>
            <person name="Yada T."/>
            <person name="Nakamura Y."/>
            <person name="Ohara O."/>
            <person name="Isogai T."/>
            <person name="Sugano S."/>
        </authorList>
    </citation>
    <scope>NUCLEOTIDE SEQUENCE [LARGE SCALE MRNA] (ISOFORM 1)</scope>
</reference>
<reference key="5">
    <citation type="journal article" date="2006" name="Nature">
        <title>The DNA sequence, annotation and analysis of human chromosome 3.</title>
        <authorList>
            <person name="Muzny D.M."/>
            <person name="Scherer S.E."/>
            <person name="Kaul R."/>
            <person name="Wang J."/>
            <person name="Yu J."/>
            <person name="Sudbrak R."/>
            <person name="Buhay C.J."/>
            <person name="Chen R."/>
            <person name="Cree A."/>
            <person name="Ding Y."/>
            <person name="Dugan-Rocha S."/>
            <person name="Gill R."/>
            <person name="Gunaratne P."/>
            <person name="Harris R.A."/>
            <person name="Hawes A.C."/>
            <person name="Hernandez J."/>
            <person name="Hodgson A.V."/>
            <person name="Hume J."/>
            <person name="Jackson A."/>
            <person name="Khan Z.M."/>
            <person name="Kovar-Smith C."/>
            <person name="Lewis L.R."/>
            <person name="Lozado R.J."/>
            <person name="Metzker M.L."/>
            <person name="Milosavljevic A."/>
            <person name="Miner G.R."/>
            <person name="Morgan M.B."/>
            <person name="Nazareth L.V."/>
            <person name="Scott G."/>
            <person name="Sodergren E."/>
            <person name="Song X.-Z."/>
            <person name="Steffen D."/>
            <person name="Wei S."/>
            <person name="Wheeler D.A."/>
            <person name="Wright M.W."/>
            <person name="Worley K.C."/>
            <person name="Yuan Y."/>
            <person name="Zhang Z."/>
            <person name="Adams C.Q."/>
            <person name="Ansari-Lari M.A."/>
            <person name="Ayele M."/>
            <person name="Brown M.J."/>
            <person name="Chen G."/>
            <person name="Chen Z."/>
            <person name="Clendenning J."/>
            <person name="Clerc-Blankenburg K.P."/>
            <person name="Chen R."/>
            <person name="Chen Z."/>
            <person name="Davis C."/>
            <person name="Delgado O."/>
            <person name="Dinh H.H."/>
            <person name="Dong W."/>
            <person name="Draper H."/>
            <person name="Ernst S."/>
            <person name="Fu G."/>
            <person name="Gonzalez-Garay M.L."/>
            <person name="Garcia D.K."/>
            <person name="Gillett W."/>
            <person name="Gu J."/>
            <person name="Hao B."/>
            <person name="Haugen E."/>
            <person name="Havlak P."/>
            <person name="He X."/>
            <person name="Hennig S."/>
            <person name="Hu S."/>
            <person name="Huang W."/>
            <person name="Jackson L.R."/>
            <person name="Jacob L.S."/>
            <person name="Kelly S.H."/>
            <person name="Kube M."/>
            <person name="Levy R."/>
            <person name="Li Z."/>
            <person name="Liu B."/>
            <person name="Liu J."/>
            <person name="Liu W."/>
            <person name="Lu J."/>
            <person name="Maheshwari M."/>
            <person name="Nguyen B.-V."/>
            <person name="Okwuonu G.O."/>
            <person name="Palmeiri A."/>
            <person name="Pasternak S."/>
            <person name="Perez L.M."/>
            <person name="Phelps K.A."/>
            <person name="Plopper F.J."/>
            <person name="Qiang B."/>
            <person name="Raymond C."/>
            <person name="Rodriguez R."/>
            <person name="Saenphimmachak C."/>
            <person name="Santibanez J."/>
            <person name="Shen H."/>
            <person name="Shen Y."/>
            <person name="Subramanian S."/>
            <person name="Tabor P.E."/>
            <person name="Verduzco D."/>
            <person name="Waldron L."/>
            <person name="Wang J."/>
            <person name="Wang J."/>
            <person name="Wang Q."/>
            <person name="Williams G.A."/>
            <person name="Wong G.K.-S."/>
            <person name="Yao Z."/>
            <person name="Zhang J."/>
            <person name="Zhang X."/>
            <person name="Zhao G."/>
            <person name="Zhou J."/>
            <person name="Zhou Y."/>
            <person name="Nelson D."/>
            <person name="Lehrach H."/>
            <person name="Reinhardt R."/>
            <person name="Naylor S.L."/>
            <person name="Yang H."/>
            <person name="Olson M."/>
            <person name="Weinstock G."/>
            <person name="Gibbs R.A."/>
        </authorList>
    </citation>
    <scope>NUCLEOTIDE SEQUENCE [LARGE SCALE GENOMIC DNA]</scope>
</reference>
<reference key="6">
    <citation type="submission" date="2005-07" db="EMBL/GenBank/DDBJ databases">
        <authorList>
            <person name="Mural R.J."/>
            <person name="Istrail S."/>
            <person name="Sutton G.G."/>
            <person name="Florea L."/>
            <person name="Halpern A.L."/>
            <person name="Mobarry C.M."/>
            <person name="Lippert R."/>
            <person name="Walenz B."/>
            <person name="Shatkay H."/>
            <person name="Dew I."/>
            <person name="Miller J.R."/>
            <person name="Flanigan M.J."/>
            <person name="Edwards N.J."/>
            <person name="Bolanos R."/>
            <person name="Fasulo D."/>
            <person name="Halldorsson B.V."/>
            <person name="Hannenhalli S."/>
            <person name="Turner R."/>
            <person name="Yooseph S."/>
            <person name="Lu F."/>
            <person name="Nusskern D.R."/>
            <person name="Shue B.C."/>
            <person name="Zheng X.H."/>
            <person name="Zhong F."/>
            <person name="Delcher A.L."/>
            <person name="Huson D.H."/>
            <person name="Kravitz S.A."/>
            <person name="Mouchard L."/>
            <person name="Reinert K."/>
            <person name="Remington K.A."/>
            <person name="Clark A.G."/>
            <person name="Waterman M.S."/>
            <person name="Eichler E.E."/>
            <person name="Adams M.D."/>
            <person name="Hunkapiller M.W."/>
            <person name="Myers E.W."/>
            <person name="Venter J.C."/>
        </authorList>
    </citation>
    <scope>NUCLEOTIDE SEQUENCE [LARGE SCALE GENOMIC DNA]</scope>
</reference>
<reference key="7">
    <citation type="journal article" date="1995" name="Biochem. Biophys. Res. Commun.">
        <title>The orphan receptor TAK1 acts as a repressor of RAR-, RXR- and T3R-mediated signaling pathways.</title>
        <authorList>
            <person name="Hirose T."/>
            <person name="Apfel R."/>
            <person name="Pfahl M."/>
            <person name="Jetten A.M."/>
        </authorList>
    </citation>
    <scope>DNA-BINDING</scope>
    <scope>FUNCTION</scope>
</reference>
<reference key="8">
    <citation type="journal article" date="1998" name="J. Biol. Chem.">
        <title>Regulation of peroxisome proliferator-activated receptor alpha-induced transactivation by the nuclear orphan receptor TAK1/TR4.</title>
        <authorList>
            <person name="Yan Z.H."/>
            <person name="Karam W.G."/>
            <person name="Staudinger J.L."/>
            <person name="Medvedev A."/>
            <person name="Ghanayem B.I."/>
            <person name="Jetten A.M."/>
        </authorList>
    </citation>
    <scope>DNA-BINDING</scope>
    <scope>INTERACTION WITH NRIP1</scope>
    <scope>FUNCTION</scope>
</reference>
<reference key="9">
    <citation type="journal article" date="1999" name="J. Biol. Chem.">
        <title>Differential regulation of direct repeat 3 vitamin D3 and direct repeat 4 thyroid hormone signaling pathways by the human TR4 orphan receptor.</title>
        <authorList>
            <person name="Lee Y.F."/>
            <person name="Young W.J."/>
            <person name="Lin W.J."/>
            <person name="Shyr C.R."/>
            <person name="Chang C."/>
        </authorList>
    </citation>
    <scope>DNA-BINDING</scope>
    <scope>FUNCTION</scope>
</reference>
<reference key="10">
    <citation type="journal article" date="2000" name="J. Biol. Chem.">
        <title>Nuclear orphan receptors regulate transcription of the gene for the human luteinizing hormone receptor.</title>
        <authorList>
            <person name="Zhang Y."/>
            <person name="Dufau M.L."/>
        </authorList>
    </citation>
    <scope>FUNCTION</scope>
    <scope>SUBCELLULAR LOCATION</scope>
</reference>
<reference key="11">
    <citation type="journal article" date="2003" name="J. Biol. Chem.">
        <title>Identification of a novel testicular orphan receptor-4 (TR4)-associated protein as repressor for the selective suppression of TR4-mediated transactivation.</title>
        <authorList>
            <person name="Yang Y."/>
            <person name="Wang X."/>
            <person name="Dong T."/>
            <person name="Kim E."/>
            <person name="Lin W.-J."/>
            <person name="Chang C."/>
        </authorList>
    </citation>
    <scope>INTERACTION WITH NR2C2AP</scope>
</reference>
<reference key="12">
    <citation type="journal article" date="2004" name="Nucleic Acids Res.">
        <title>TIP27: a novel repressor of the nuclear orphan receptor TAK1/TR4.</title>
        <authorList>
            <person name="Nakajima T."/>
            <person name="Fujino S."/>
            <person name="Nakanishi G."/>
            <person name="Kim Y.S."/>
            <person name="Jetten A.M."/>
        </authorList>
    </citation>
    <scope>INTERACTION WITH JAZF1</scope>
    <scope>SUBCELLULAR LOCATION</scope>
    <scope>MUTAGENESIS OF ILE-576</scope>
</reference>
<reference key="13">
    <citation type="journal article" date="2007" name="Genes Dev.">
        <title>The TR2 and TR4 orphan nuclear receptors repress Gata1 transcription.</title>
        <authorList>
            <person name="Tanabe O."/>
            <person name="Shen Y."/>
            <person name="Liu Q."/>
            <person name="Campbell A.D."/>
            <person name="Kuroha T."/>
            <person name="Yamamoto M."/>
            <person name="Engel J.D."/>
        </authorList>
    </citation>
    <scope>HETERODIMERIZATION</scope>
    <scope>FUNCTION</scope>
</reference>
<reference key="14">
    <citation type="journal article" date="2008" name="Endocrinology">
        <title>Oxidative stress stimulates testicular orphan receptor 4 through forkhead transcription factor forkhead box O3a.</title>
        <authorList>
            <person name="Li G."/>
            <person name="Lee Y.F."/>
            <person name="Liu S."/>
            <person name="Cai Y."/>
            <person name="Xie S."/>
            <person name="Liu N.C."/>
            <person name="Bao B.Y."/>
            <person name="Chen Z."/>
            <person name="Chang C."/>
        </authorList>
    </citation>
    <scope>INDUCTION</scope>
</reference>
<reference key="15">
    <citation type="journal article" date="2008" name="Proc. Natl. Acad. Sci. U.S.A.">
        <title>A quantitative atlas of mitotic phosphorylation.</title>
        <authorList>
            <person name="Dephoure N."/>
            <person name="Zhou C."/>
            <person name="Villen J."/>
            <person name="Beausoleil S.A."/>
            <person name="Bakalarski C.E."/>
            <person name="Elledge S.J."/>
            <person name="Gygi S.P."/>
        </authorList>
    </citation>
    <scope>PHOSPHORYLATION [LARGE SCALE ANALYSIS] AT SER-219</scope>
    <scope>IDENTIFICATION BY MASS SPECTROMETRY [LARGE SCALE ANALYSIS]</scope>
    <source>
        <tissue>Cervix carcinoma</tissue>
    </source>
</reference>
<reference key="16">
    <citation type="journal article" date="2009" name="Sci. Signal.">
        <title>Quantitative phosphoproteomic analysis of T cell receptor signaling reveals system-wide modulation of protein-protein interactions.</title>
        <authorList>
            <person name="Mayya V."/>
            <person name="Lundgren D.H."/>
            <person name="Hwang S.-I."/>
            <person name="Rezaul K."/>
            <person name="Wu L."/>
            <person name="Eng J.K."/>
            <person name="Rodionov V."/>
            <person name="Han D.K."/>
        </authorList>
    </citation>
    <scope>PHOSPHORYLATION [LARGE SCALE ANALYSIS] AT SER-19 AND SER-46</scope>
    <scope>IDENTIFICATION BY MASS SPECTROMETRY [LARGE SCALE ANALYSIS]</scope>
    <source>
        <tissue>Leukemic T-cell</tissue>
    </source>
</reference>
<reference key="17">
    <citation type="journal article" date="2010" name="Sci. Signal.">
        <title>Quantitative phosphoproteomics reveals widespread full phosphorylation site occupancy during mitosis.</title>
        <authorList>
            <person name="Olsen J.V."/>
            <person name="Vermeulen M."/>
            <person name="Santamaria A."/>
            <person name="Kumar C."/>
            <person name="Miller M.L."/>
            <person name="Jensen L.J."/>
            <person name="Gnad F."/>
            <person name="Cox J."/>
            <person name="Jensen T.S."/>
            <person name="Nigg E.A."/>
            <person name="Brunak S."/>
            <person name="Mann M."/>
        </authorList>
    </citation>
    <scope>PHOSPHORYLATION [LARGE SCALE ANALYSIS] AT SER-19; SER-46; SER-68; SER-98 AND SER-219</scope>
    <scope>IDENTIFICATION BY MASS SPECTROMETRY [LARGE SCALE ANALYSIS]</scope>
    <source>
        <tissue>Cervix carcinoma</tissue>
    </source>
</reference>
<reference key="18">
    <citation type="journal article" date="2012" name="Cell. Microbiol.">
        <title>NLRP10 enhances Shigella-induced pro-inflammatory responses.</title>
        <authorList>
            <person name="Lautz K."/>
            <person name="Damm A."/>
            <person name="Menning M."/>
            <person name="Wenger J."/>
            <person name="Adam A.C."/>
            <person name="Zigrino P."/>
            <person name="Kremmer E."/>
            <person name="Kufer T.A."/>
        </authorList>
    </citation>
    <scope>INTERACTION WITH NLRP10</scope>
</reference>
<reference key="19">
    <citation type="journal article" date="2013" name="J. Proteome Res.">
        <title>Toward a comprehensive characterization of a human cancer cell phosphoproteome.</title>
        <authorList>
            <person name="Zhou H."/>
            <person name="Di Palma S."/>
            <person name="Preisinger C."/>
            <person name="Peng M."/>
            <person name="Polat A.N."/>
            <person name="Heck A.J."/>
            <person name="Mohammed S."/>
        </authorList>
    </citation>
    <scope>PHOSPHORYLATION [LARGE SCALE ANALYSIS] AT SER-19; SER-46; SER-68; SER-98 AND SER-219</scope>
    <scope>IDENTIFICATION BY MASS SPECTROMETRY [LARGE SCALE ANALYSIS]</scope>
    <source>
        <tissue>Cervix carcinoma</tissue>
        <tissue>Erythroleukemia</tissue>
    </source>
</reference>
<reference key="20">
    <citation type="journal article" date="2017" name="Nat. Struct. Mol. Biol.">
        <title>Site-specific mapping of the human SUMO proteome reveals co-modification with phosphorylation.</title>
        <authorList>
            <person name="Hendriks I.A."/>
            <person name="Lyon D."/>
            <person name="Young C."/>
            <person name="Jensen L.J."/>
            <person name="Vertegaal A.C."/>
            <person name="Nielsen M.L."/>
        </authorList>
    </citation>
    <scope>SUMOYLATION [LARGE SCALE ANALYSIS] AT LYS-192</scope>
    <scope>IDENTIFICATION BY MASS SPECTROMETRY [LARGE SCALE ANALYSIS]</scope>
</reference>
<protein>
    <recommendedName>
        <fullName>Nuclear receptor subfamily 2 group C member 2</fullName>
    </recommendedName>
    <alternativeName>
        <fullName>Orphan nuclear receptor TAK1</fullName>
    </alternativeName>
    <alternativeName>
        <fullName>Orphan nuclear receptor TR4</fullName>
    </alternativeName>
    <alternativeName>
        <fullName>Testicular receptor 4</fullName>
    </alternativeName>
</protein>
<keyword id="KW-0002">3D-structure</keyword>
<keyword id="KW-0007">Acetylation</keyword>
<keyword id="KW-0010">Activator</keyword>
<keyword id="KW-0025">Alternative splicing</keyword>
<keyword id="KW-0221">Differentiation</keyword>
<keyword id="KW-0238">DNA-binding</keyword>
<keyword id="KW-1017">Isopeptide bond</keyword>
<keyword id="KW-0479">Metal-binding</keyword>
<keyword id="KW-0539">Nucleus</keyword>
<keyword id="KW-0597">Phosphoprotein</keyword>
<keyword id="KW-1267">Proteomics identification</keyword>
<keyword id="KW-0675">Receptor</keyword>
<keyword id="KW-1185">Reference proteome</keyword>
<keyword id="KW-0678">Repressor</keyword>
<keyword id="KW-0744">Spermatogenesis</keyword>
<keyword id="KW-0804">Transcription</keyword>
<keyword id="KW-0805">Transcription regulation</keyword>
<keyword id="KW-0832">Ubl conjugation</keyword>
<keyword id="KW-0862">Zinc</keyword>
<keyword id="KW-0863">Zinc-finger</keyword>
<evidence type="ECO:0000250" key="1"/>
<evidence type="ECO:0000250" key="2">
    <source>
        <dbReference type="UniProtKB" id="P49117"/>
    </source>
</evidence>
<evidence type="ECO:0000255" key="3">
    <source>
        <dbReference type="PROSITE-ProRule" id="PRU00407"/>
    </source>
</evidence>
<evidence type="ECO:0000255" key="4">
    <source>
        <dbReference type="PROSITE-ProRule" id="PRU01189"/>
    </source>
</evidence>
<evidence type="ECO:0000269" key="5">
    <source>
    </source>
</evidence>
<evidence type="ECO:0000269" key="6">
    <source>
    </source>
</evidence>
<evidence type="ECO:0000269" key="7">
    <source>
    </source>
</evidence>
<evidence type="ECO:0000269" key="8">
    <source>
    </source>
</evidence>
<evidence type="ECO:0000269" key="9">
    <source>
    </source>
</evidence>
<evidence type="ECO:0000269" key="10">
    <source>
    </source>
</evidence>
<evidence type="ECO:0000269" key="11">
    <source>
    </source>
</evidence>
<evidence type="ECO:0000269" key="12">
    <source>
    </source>
</evidence>
<evidence type="ECO:0000269" key="13">
    <source>
    </source>
</evidence>
<evidence type="ECO:0000303" key="14">
    <source>
    </source>
</evidence>
<evidence type="ECO:0000305" key="15"/>
<evidence type="ECO:0007744" key="16">
    <source>
    </source>
</evidence>
<evidence type="ECO:0007744" key="17">
    <source>
    </source>
</evidence>
<evidence type="ECO:0007744" key="18">
    <source>
    </source>
</evidence>
<evidence type="ECO:0007744" key="19">
    <source>
    </source>
</evidence>
<evidence type="ECO:0007744" key="20">
    <source>
    </source>
</evidence>
<evidence type="ECO:0007829" key="21">
    <source>
        <dbReference type="PDB" id="3P0U"/>
    </source>
</evidence>
<evidence type="ECO:0007829" key="22">
    <source>
        <dbReference type="PDB" id="7XV9"/>
    </source>
</evidence>
<evidence type="ECO:0007829" key="23">
    <source>
        <dbReference type="PDB" id="7XVA"/>
    </source>
</evidence>
<feature type="chain" id="PRO_0000053588" description="Nuclear receptor subfamily 2 group C member 2">
    <location>
        <begin position="1"/>
        <end position="596"/>
    </location>
</feature>
<feature type="domain" description="NR LBD" evidence="4">
    <location>
        <begin position="341"/>
        <end position="583"/>
    </location>
</feature>
<feature type="DNA-binding region" description="Nuclear receptor" evidence="3">
    <location>
        <begin position="114"/>
        <end position="189"/>
    </location>
</feature>
<feature type="zinc finger region" description="NR C4-type" evidence="3">
    <location>
        <begin position="117"/>
        <end position="137"/>
    </location>
</feature>
<feature type="zinc finger region" description="NR C4-type" evidence="3">
    <location>
        <begin position="153"/>
        <end position="177"/>
    </location>
</feature>
<feature type="modified residue" description="Phosphoserine; by MAPK" evidence="17 18 19">
    <location>
        <position position="19"/>
    </location>
</feature>
<feature type="modified residue" description="Phosphoserine" evidence="17 18 19">
    <location>
        <position position="46"/>
    </location>
</feature>
<feature type="modified residue" description="Phosphoserine; by MAPK" evidence="2">
    <location>
        <position position="55"/>
    </location>
</feature>
<feature type="modified residue" description="Phosphoserine; by MAPK" evidence="18 19">
    <location>
        <position position="68"/>
    </location>
</feature>
<feature type="modified residue" description="Phosphoserine" evidence="18 19">
    <location>
        <position position="98"/>
    </location>
</feature>
<feature type="modified residue" description="Phosphoserine" evidence="16 18 19">
    <location>
        <position position="219"/>
    </location>
</feature>
<feature type="modified residue" description="N6-acetyllysine" evidence="2">
    <location>
        <position position="231"/>
    </location>
</feature>
<feature type="cross-link" description="Glycyl lysine isopeptide (Lys-Gly) (interchain with G-Cter in SUMO2)" evidence="20">
    <location>
        <position position="192"/>
    </location>
</feature>
<feature type="splice variant" id="VSP_039522" description="In isoform 2." evidence="14">
    <original>Q</original>
    <variation>QGSEPASGPLSVFTSLNKEK</variation>
    <location>
        <position position="24"/>
    </location>
</feature>
<feature type="mutagenesis site" description="Reduces interaction with JAZF1." evidence="8">
    <original>I</original>
    <variation>N</variation>
    <location>
        <position position="576"/>
    </location>
</feature>
<feature type="sequence conflict" description="In Ref. 3; BAH02299." evidence="15" ref="3">
    <original>V</original>
    <variation>A</variation>
    <location>
        <position position="108"/>
    </location>
</feature>
<feature type="sequence conflict" description="In Ref. 2; AAA21474." evidence="15" ref="2">
    <original>N</original>
    <variation>S</variation>
    <location>
        <position position="156"/>
    </location>
</feature>
<feature type="sequence conflict" description="In Ref. 3; BAH02299." evidence="15" ref="3">
    <original>S</original>
    <variation>F</variation>
    <location>
        <position position="326"/>
    </location>
</feature>
<feature type="sequence conflict" description="In Ref. 2; AAA21474." evidence="15" ref="2">
    <original>W</original>
    <variation>R</variation>
    <location>
        <position position="400"/>
    </location>
</feature>
<feature type="sequence conflict" description="In Ref. 2; AAA21474." evidence="15" ref="2">
    <original>A</original>
    <variation>G</variation>
    <location>
        <position position="409"/>
    </location>
</feature>
<feature type="sequence conflict" description="In Ref. 2; AAA21474." evidence="15" ref="2">
    <original>KL</original>
    <variation>NW</variation>
    <location>
        <begin position="484"/>
        <end position="485"/>
    </location>
</feature>
<feature type="sequence conflict" description="In Ref. 2; AAA21474 and 3; BAH02299." evidence="15" ref="2 3">
    <original>A</original>
    <variation>V</variation>
    <location>
        <position position="594"/>
    </location>
</feature>
<feature type="turn" evidence="22">
    <location>
        <begin position="118"/>
        <end position="120"/>
    </location>
</feature>
<feature type="strand" evidence="22">
    <location>
        <begin position="126"/>
        <end position="128"/>
    </location>
</feature>
<feature type="strand" evidence="22">
    <location>
        <begin position="131"/>
        <end position="133"/>
    </location>
</feature>
<feature type="helix" evidence="22">
    <location>
        <begin position="135"/>
        <end position="146"/>
    </location>
</feature>
<feature type="strand" evidence="22">
    <location>
        <begin position="154"/>
        <end position="157"/>
    </location>
</feature>
<feature type="strand" evidence="22">
    <location>
        <begin position="163"/>
        <end position="165"/>
    </location>
</feature>
<feature type="helix" evidence="22">
    <location>
        <begin position="170"/>
        <end position="179"/>
    </location>
</feature>
<feature type="helix" evidence="22">
    <location>
        <begin position="184"/>
        <end position="186"/>
    </location>
</feature>
<feature type="strand" evidence="21">
    <location>
        <begin position="354"/>
        <end position="357"/>
    </location>
</feature>
<feature type="helix" evidence="23">
    <location>
        <begin position="364"/>
        <end position="367"/>
    </location>
</feature>
<feature type="strand" evidence="23">
    <location>
        <begin position="374"/>
        <end position="376"/>
    </location>
</feature>
<feature type="helix" evidence="23">
    <location>
        <begin position="383"/>
        <end position="402"/>
    </location>
</feature>
<feature type="helix" evidence="23">
    <location>
        <begin position="405"/>
        <end position="409"/>
    </location>
</feature>
<feature type="helix" evidence="23">
    <location>
        <begin position="412"/>
        <end position="433"/>
    </location>
</feature>
<feature type="turn" evidence="23">
    <location>
        <begin position="434"/>
        <end position="439"/>
    </location>
</feature>
<feature type="helix" evidence="23">
    <location>
        <begin position="440"/>
        <end position="448"/>
    </location>
</feature>
<feature type="helix" evidence="23">
    <location>
        <begin position="466"/>
        <end position="484"/>
    </location>
</feature>
<feature type="helix" evidence="23">
    <location>
        <begin position="489"/>
        <end position="500"/>
    </location>
</feature>
<feature type="helix" evidence="23">
    <location>
        <begin position="511"/>
        <end position="532"/>
    </location>
</feature>
<feature type="turn" evidence="21">
    <location>
        <begin position="533"/>
        <end position="535"/>
    </location>
</feature>
<feature type="helix" evidence="23">
    <location>
        <begin position="539"/>
        <end position="544"/>
    </location>
</feature>
<feature type="helix" evidence="23">
    <location>
        <begin position="547"/>
        <end position="550"/>
    </location>
</feature>
<feature type="helix" evidence="23">
    <location>
        <begin position="555"/>
        <end position="562"/>
    </location>
</feature>
<feature type="helix" evidence="21">
    <location>
        <begin position="567"/>
        <end position="570"/>
    </location>
</feature>
<feature type="helix" evidence="23">
    <location>
        <begin position="572"/>
        <end position="581"/>
    </location>
</feature>
<feature type="helix" evidence="23">
    <location>
        <begin position="584"/>
        <end position="593"/>
    </location>
</feature>
<gene>
    <name type="primary">NR2C2</name>
    <name type="synonym">TAK1</name>
    <name type="synonym">TR4</name>
</gene>
<dbReference type="EMBL" id="U10990">
    <property type="protein sequence ID" value="AAC50118.1"/>
    <property type="molecule type" value="mRNA"/>
</dbReference>
<dbReference type="EMBL" id="L27586">
    <property type="protein sequence ID" value="AAA21474.1"/>
    <property type="molecule type" value="mRNA"/>
</dbReference>
<dbReference type="EMBL" id="AB307708">
    <property type="protein sequence ID" value="BAH02299.1"/>
    <property type="molecule type" value="mRNA"/>
</dbReference>
<dbReference type="EMBL" id="AK290590">
    <property type="protein sequence ID" value="BAF83279.1"/>
    <property type="molecule type" value="mRNA"/>
</dbReference>
<dbReference type="EMBL" id="AC090937">
    <property type="status" value="NOT_ANNOTATED_CDS"/>
    <property type="molecule type" value="Genomic_DNA"/>
</dbReference>
<dbReference type="EMBL" id="AC090954">
    <property type="status" value="NOT_ANNOTATED_CDS"/>
    <property type="molecule type" value="Genomic_DNA"/>
</dbReference>
<dbReference type="EMBL" id="CH471055">
    <property type="protein sequence ID" value="EAW64215.1"/>
    <property type="molecule type" value="Genomic_DNA"/>
</dbReference>
<dbReference type="CCDS" id="CCDS2621.1">
    <molecule id="P49116-2"/>
</dbReference>
<dbReference type="CCDS" id="CCDS74905.1">
    <molecule id="P49116-1"/>
</dbReference>
<dbReference type="PIR" id="A57031">
    <property type="entry name" value="A57031"/>
</dbReference>
<dbReference type="PIR" id="I59309">
    <property type="entry name" value="I59309"/>
</dbReference>
<dbReference type="RefSeq" id="NP_001278623.1">
    <molecule id="P49116-1"/>
    <property type="nucleotide sequence ID" value="NM_001291694.2"/>
</dbReference>
<dbReference type="RefSeq" id="NP_003289.2">
    <molecule id="P49116-2"/>
    <property type="nucleotide sequence ID" value="NM_003298.4"/>
</dbReference>
<dbReference type="RefSeq" id="XP_011532366.1">
    <molecule id="P49116-2"/>
    <property type="nucleotide sequence ID" value="XM_011534064.4"/>
</dbReference>
<dbReference type="RefSeq" id="XP_011532367.1">
    <molecule id="P49116-2"/>
    <property type="nucleotide sequence ID" value="XM_011534065.4"/>
</dbReference>
<dbReference type="RefSeq" id="XP_011532368.1">
    <molecule id="P49116-2"/>
    <property type="nucleotide sequence ID" value="XM_011534066.4"/>
</dbReference>
<dbReference type="RefSeq" id="XP_016862609.1">
    <property type="nucleotide sequence ID" value="XM_017007120.1"/>
</dbReference>
<dbReference type="RefSeq" id="XP_047304790.1">
    <molecule id="P49116-2"/>
    <property type="nucleotide sequence ID" value="XM_047448834.1"/>
</dbReference>
<dbReference type="RefSeq" id="XP_054203699.1">
    <molecule id="P49116-2"/>
    <property type="nucleotide sequence ID" value="XM_054347724.1"/>
</dbReference>
<dbReference type="RefSeq" id="XP_054203700.1">
    <molecule id="P49116-2"/>
    <property type="nucleotide sequence ID" value="XM_054347725.1"/>
</dbReference>
<dbReference type="RefSeq" id="XP_054203701.1">
    <molecule id="P49116-2"/>
    <property type="nucleotide sequence ID" value="XM_054347726.1"/>
</dbReference>
<dbReference type="PDB" id="3P0U">
    <property type="method" value="X-ray"/>
    <property type="resolution" value="3.00 A"/>
    <property type="chains" value="A/B=348-596"/>
</dbReference>
<dbReference type="PDB" id="7XV6">
    <property type="method" value="X-ray"/>
    <property type="resolution" value="2.30 A"/>
    <property type="chains" value="A/B=113-196"/>
</dbReference>
<dbReference type="PDB" id="7XV8">
    <property type="method" value="X-ray"/>
    <property type="resolution" value="3.20 A"/>
    <property type="chains" value="A/B=113-189"/>
</dbReference>
<dbReference type="PDB" id="7XV9">
    <property type="method" value="X-ray"/>
    <property type="resolution" value="1.60 A"/>
    <property type="chains" value="A/B=113-189"/>
</dbReference>
<dbReference type="PDB" id="7XVA">
    <property type="method" value="X-ray"/>
    <property type="resolution" value="1.86 A"/>
    <property type="chains" value="A=341-596"/>
</dbReference>
<dbReference type="PDBsum" id="3P0U"/>
<dbReference type="PDBsum" id="7XV6"/>
<dbReference type="PDBsum" id="7XV8"/>
<dbReference type="PDBsum" id="7XV9"/>
<dbReference type="PDBsum" id="7XVA"/>
<dbReference type="SMR" id="P49116"/>
<dbReference type="BioGRID" id="113034">
    <property type="interactions" value="1402"/>
</dbReference>
<dbReference type="CORUM" id="P49116"/>
<dbReference type="DIP" id="DIP-5999N"/>
<dbReference type="FunCoup" id="P49116">
    <property type="interactions" value="4361"/>
</dbReference>
<dbReference type="IntAct" id="P49116">
    <property type="interactions" value="57"/>
</dbReference>
<dbReference type="MINT" id="P49116"/>
<dbReference type="STRING" id="9606.ENSP00000483059"/>
<dbReference type="BindingDB" id="P49116"/>
<dbReference type="ChEMBL" id="CHEMBL5716"/>
<dbReference type="DrugCentral" id="P49116"/>
<dbReference type="GuidetoPHARMACOLOGY" id="614"/>
<dbReference type="GlyGen" id="P49116">
    <property type="glycosylation" value="4 sites, 1 N-linked glycan (1 site), 1 O-linked glycan (3 sites)"/>
</dbReference>
<dbReference type="iPTMnet" id="P49116"/>
<dbReference type="PhosphoSitePlus" id="P49116"/>
<dbReference type="BioMuta" id="NR2C2"/>
<dbReference type="DMDM" id="1351190"/>
<dbReference type="jPOST" id="P49116"/>
<dbReference type="MassIVE" id="P49116"/>
<dbReference type="PaxDb" id="9606-ENSP00000483059"/>
<dbReference type="PeptideAtlas" id="P49116"/>
<dbReference type="ProteomicsDB" id="55962">
    <molecule id="P49116-1"/>
</dbReference>
<dbReference type="ProteomicsDB" id="55963">
    <molecule id="P49116-2"/>
</dbReference>
<dbReference type="Pumba" id="P49116"/>
<dbReference type="TopDownProteomics" id="P49116-2">
    <molecule id="P49116-2"/>
</dbReference>
<dbReference type="Antibodypedia" id="1697">
    <property type="antibodies" value="510 antibodies from 40 providers"/>
</dbReference>
<dbReference type="DNASU" id="7182"/>
<dbReference type="Ensembl" id="ENST00000323373.10">
    <molecule id="P49116-2"/>
    <property type="protein sequence ID" value="ENSP00000320447.6"/>
    <property type="gene ID" value="ENSG00000177463.16"/>
</dbReference>
<dbReference type="Ensembl" id="ENST00000393102.7">
    <molecule id="P49116-1"/>
    <property type="protein sequence ID" value="ENSP00000376814.3"/>
    <property type="gene ID" value="ENSG00000177463.16"/>
</dbReference>
<dbReference type="Ensembl" id="ENST00000406272.6">
    <molecule id="P49116-1"/>
    <property type="protein sequence ID" value="ENSP00000384463.2"/>
    <property type="gene ID" value="ENSG00000177463.16"/>
</dbReference>
<dbReference type="Ensembl" id="ENST00000425241.6">
    <molecule id="P49116-1"/>
    <property type="protein sequence ID" value="ENSP00000388387.1"/>
    <property type="gene ID" value="ENSG00000177463.16"/>
</dbReference>
<dbReference type="Ensembl" id="ENST00000617312.4">
    <molecule id="P49116-2"/>
    <property type="protein sequence ID" value="ENSP00000483059.1"/>
    <property type="gene ID" value="ENSG00000177463.16"/>
</dbReference>
<dbReference type="GeneID" id="7182"/>
<dbReference type="KEGG" id="hsa:7182"/>
<dbReference type="MANE-Select" id="ENST00000425241.6">
    <property type="protein sequence ID" value="ENSP00000388387.1"/>
    <property type="RefSeq nucleotide sequence ID" value="NM_001291694.2"/>
    <property type="RefSeq protein sequence ID" value="NP_001278623.1"/>
</dbReference>
<dbReference type="UCSC" id="uc003bzi.4">
    <molecule id="P49116-1"/>
    <property type="organism name" value="human"/>
</dbReference>
<dbReference type="AGR" id="HGNC:7972"/>
<dbReference type="CTD" id="7182"/>
<dbReference type="DisGeNET" id="7182"/>
<dbReference type="GeneCards" id="NR2C2"/>
<dbReference type="HGNC" id="HGNC:7972">
    <property type="gene designation" value="NR2C2"/>
</dbReference>
<dbReference type="HPA" id="ENSG00000177463">
    <property type="expression patterns" value="Low tissue specificity"/>
</dbReference>
<dbReference type="MIM" id="601426">
    <property type="type" value="gene"/>
</dbReference>
<dbReference type="neXtProt" id="NX_P49116"/>
<dbReference type="OpenTargets" id="ENSG00000177463"/>
<dbReference type="PharmGKB" id="PA31755"/>
<dbReference type="VEuPathDB" id="HostDB:ENSG00000177463"/>
<dbReference type="eggNOG" id="KOG3575">
    <property type="taxonomic scope" value="Eukaryota"/>
</dbReference>
<dbReference type="GeneTree" id="ENSGT00940000158393"/>
<dbReference type="HOGENOM" id="CLU_007368_16_2_1"/>
<dbReference type="InParanoid" id="P49116"/>
<dbReference type="OMA" id="IHWARSI"/>
<dbReference type="OrthoDB" id="10024684at2759"/>
<dbReference type="PAN-GO" id="P49116">
    <property type="GO annotations" value="6 GO annotations based on evolutionary models"/>
</dbReference>
<dbReference type="PhylomeDB" id="P49116"/>
<dbReference type="TreeFam" id="TF316650"/>
<dbReference type="PathwayCommons" id="P49116"/>
<dbReference type="Reactome" id="R-HSA-383280">
    <property type="pathway name" value="Nuclear Receptor transcription pathway"/>
</dbReference>
<dbReference type="SignaLink" id="P49116"/>
<dbReference type="SIGNOR" id="P49116"/>
<dbReference type="BioGRID-ORCS" id="7182">
    <property type="hits" value="36 hits in 1180 CRISPR screens"/>
</dbReference>
<dbReference type="ChiTaRS" id="NR2C2">
    <property type="organism name" value="human"/>
</dbReference>
<dbReference type="EvolutionaryTrace" id="P49116"/>
<dbReference type="GeneWiki" id="Testicular_receptor_4"/>
<dbReference type="GenomeRNAi" id="7182"/>
<dbReference type="Pharos" id="P49116">
    <property type="development level" value="Tchem"/>
</dbReference>
<dbReference type="PRO" id="PR:P49116"/>
<dbReference type="Proteomes" id="UP000005640">
    <property type="component" value="Chromosome 3"/>
</dbReference>
<dbReference type="RNAct" id="P49116">
    <property type="molecule type" value="protein"/>
</dbReference>
<dbReference type="Bgee" id="ENSG00000177463">
    <property type="expression patterns" value="Expressed in sural nerve and 181 other cell types or tissues"/>
</dbReference>
<dbReference type="ExpressionAtlas" id="P49116">
    <property type="expression patterns" value="baseline and differential"/>
</dbReference>
<dbReference type="GO" id="GO:0000785">
    <property type="term" value="C:chromatin"/>
    <property type="evidence" value="ECO:0000247"/>
    <property type="project" value="NTNU_SB"/>
</dbReference>
<dbReference type="GO" id="GO:0005654">
    <property type="term" value="C:nucleoplasm"/>
    <property type="evidence" value="ECO:0000314"/>
    <property type="project" value="HPA"/>
</dbReference>
<dbReference type="GO" id="GO:0001228">
    <property type="term" value="F:DNA-binding transcription activator activity, RNA polymerase II-specific"/>
    <property type="evidence" value="ECO:0000314"/>
    <property type="project" value="NTNU_SB"/>
</dbReference>
<dbReference type="GO" id="GO:0003700">
    <property type="term" value="F:DNA-binding transcription factor activity"/>
    <property type="evidence" value="ECO:0000314"/>
    <property type="project" value="UniProtKB"/>
</dbReference>
<dbReference type="GO" id="GO:0000981">
    <property type="term" value="F:DNA-binding transcription factor activity, RNA polymerase II-specific"/>
    <property type="evidence" value="ECO:0000247"/>
    <property type="project" value="NTNU_SB"/>
</dbReference>
<dbReference type="GO" id="GO:0004879">
    <property type="term" value="F:nuclear receptor activity"/>
    <property type="evidence" value="ECO:0000318"/>
    <property type="project" value="GO_Central"/>
</dbReference>
<dbReference type="GO" id="GO:0000978">
    <property type="term" value="F:RNA polymerase II cis-regulatory region sequence-specific DNA binding"/>
    <property type="evidence" value="ECO:0000314"/>
    <property type="project" value="NTNU_SB"/>
</dbReference>
<dbReference type="GO" id="GO:0000977">
    <property type="term" value="F:RNA polymerase II transcription regulatory region sequence-specific DNA binding"/>
    <property type="evidence" value="ECO:0000314"/>
    <property type="project" value="NTNU_SB"/>
</dbReference>
<dbReference type="GO" id="GO:0043565">
    <property type="term" value="F:sequence-specific DNA binding"/>
    <property type="evidence" value="ECO:0000314"/>
    <property type="project" value="UniProtKB"/>
</dbReference>
<dbReference type="GO" id="GO:1990837">
    <property type="term" value="F:sequence-specific double-stranded DNA binding"/>
    <property type="evidence" value="ECO:0000314"/>
    <property type="project" value="ARUK-UCL"/>
</dbReference>
<dbReference type="GO" id="GO:0008270">
    <property type="term" value="F:zinc ion binding"/>
    <property type="evidence" value="ECO:0007669"/>
    <property type="project" value="UniProtKB-KW"/>
</dbReference>
<dbReference type="GO" id="GO:0030154">
    <property type="term" value="P:cell differentiation"/>
    <property type="evidence" value="ECO:0000318"/>
    <property type="project" value="GO_Central"/>
</dbReference>
<dbReference type="GO" id="GO:0000122">
    <property type="term" value="P:negative regulation of transcription by RNA polymerase II"/>
    <property type="evidence" value="ECO:0000353"/>
    <property type="project" value="UniProtKB"/>
</dbReference>
<dbReference type="GO" id="GO:0007399">
    <property type="term" value="P:nervous system development"/>
    <property type="evidence" value="ECO:0000304"/>
    <property type="project" value="ProtInc"/>
</dbReference>
<dbReference type="GO" id="GO:0043123">
    <property type="term" value="P:positive regulation of canonical NF-kappaB signal transduction"/>
    <property type="evidence" value="ECO:0000315"/>
    <property type="project" value="BHF-UCL"/>
</dbReference>
<dbReference type="GO" id="GO:0040019">
    <property type="term" value="P:positive regulation of embryonic development"/>
    <property type="evidence" value="ECO:0000318"/>
    <property type="project" value="GO_Central"/>
</dbReference>
<dbReference type="GO" id="GO:0046330">
    <property type="term" value="P:positive regulation of JNK cascade"/>
    <property type="evidence" value="ECO:0000315"/>
    <property type="project" value="BHF-UCL"/>
</dbReference>
<dbReference type="GO" id="GO:0045944">
    <property type="term" value="P:positive regulation of transcription by RNA polymerase II"/>
    <property type="evidence" value="ECO:0000314"/>
    <property type="project" value="UniProtKB"/>
</dbReference>
<dbReference type="GO" id="GO:0006355">
    <property type="term" value="P:regulation of DNA-templated transcription"/>
    <property type="evidence" value="ECO:0000304"/>
    <property type="project" value="ProtInc"/>
</dbReference>
<dbReference type="GO" id="GO:0007283">
    <property type="term" value="P:spermatogenesis"/>
    <property type="evidence" value="ECO:0007669"/>
    <property type="project" value="UniProtKB-KW"/>
</dbReference>
<dbReference type="GO" id="GO:0033209">
    <property type="term" value="P:tumor necrosis factor-mediated signaling pathway"/>
    <property type="evidence" value="ECO:0000315"/>
    <property type="project" value="BHF-UCL"/>
</dbReference>
<dbReference type="CDD" id="cd06967">
    <property type="entry name" value="NR_DBD_TR2_like"/>
    <property type="match status" value="1"/>
</dbReference>
<dbReference type="CDD" id="cd06952">
    <property type="entry name" value="NR_LBD_TR2_like"/>
    <property type="match status" value="1"/>
</dbReference>
<dbReference type="FunFam" id="1.10.565.10:FF:000012">
    <property type="entry name" value="Nuclear receptor subfamily 2 group C member 1"/>
    <property type="match status" value="1"/>
</dbReference>
<dbReference type="FunFam" id="3.30.50.10:FF:000015">
    <property type="entry name" value="Nuclear receptor subfamily 2, group C, member 1"/>
    <property type="match status" value="1"/>
</dbReference>
<dbReference type="Gene3D" id="3.30.50.10">
    <property type="entry name" value="Erythroid Transcription Factor GATA-1, subunit A"/>
    <property type="match status" value="1"/>
</dbReference>
<dbReference type="Gene3D" id="1.10.565.10">
    <property type="entry name" value="Retinoid X Receptor"/>
    <property type="match status" value="1"/>
</dbReference>
<dbReference type="InterPro" id="IPR035500">
    <property type="entry name" value="NHR-like_dom_sf"/>
</dbReference>
<dbReference type="InterPro" id="IPR048245">
    <property type="entry name" value="NR2C1/2-like_DBD"/>
</dbReference>
<dbReference type="InterPro" id="IPR048246">
    <property type="entry name" value="NR2C1/2-like_LBD"/>
</dbReference>
<dbReference type="InterPro" id="IPR000536">
    <property type="entry name" value="Nucl_hrmn_rcpt_lig-bd"/>
</dbReference>
<dbReference type="InterPro" id="IPR050274">
    <property type="entry name" value="Nuclear_hormone_rcpt_NR2"/>
</dbReference>
<dbReference type="InterPro" id="IPR001723">
    <property type="entry name" value="Nuclear_hrmn_rcpt"/>
</dbReference>
<dbReference type="InterPro" id="IPR001628">
    <property type="entry name" value="Znf_hrmn_rcpt"/>
</dbReference>
<dbReference type="InterPro" id="IPR013088">
    <property type="entry name" value="Znf_NHR/GATA"/>
</dbReference>
<dbReference type="PANTHER" id="PTHR24083">
    <property type="entry name" value="NUCLEAR HORMONE RECEPTOR"/>
    <property type="match status" value="1"/>
</dbReference>
<dbReference type="Pfam" id="PF00104">
    <property type="entry name" value="Hormone_recep"/>
    <property type="match status" value="1"/>
</dbReference>
<dbReference type="Pfam" id="PF00105">
    <property type="entry name" value="zf-C4"/>
    <property type="match status" value="1"/>
</dbReference>
<dbReference type="PRINTS" id="PR00398">
    <property type="entry name" value="STRDHORMONER"/>
</dbReference>
<dbReference type="PRINTS" id="PR00047">
    <property type="entry name" value="STROIDFINGER"/>
</dbReference>
<dbReference type="SMART" id="SM00430">
    <property type="entry name" value="HOLI"/>
    <property type="match status" value="1"/>
</dbReference>
<dbReference type="SMART" id="SM00399">
    <property type="entry name" value="ZnF_C4"/>
    <property type="match status" value="1"/>
</dbReference>
<dbReference type="SUPFAM" id="SSF57716">
    <property type="entry name" value="Glucocorticoid receptor-like (DNA-binding domain)"/>
    <property type="match status" value="1"/>
</dbReference>
<dbReference type="SUPFAM" id="SSF48508">
    <property type="entry name" value="Nuclear receptor ligand-binding domain"/>
    <property type="match status" value="1"/>
</dbReference>
<dbReference type="PROSITE" id="PS51843">
    <property type="entry name" value="NR_LBD"/>
    <property type="match status" value="1"/>
</dbReference>
<dbReference type="PROSITE" id="PS00031">
    <property type="entry name" value="NUCLEAR_REC_DBD_1"/>
    <property type="match status" value="1"/>
</dbReference>
<dbReference type="PROSITE" id="PS51030">
    <property type="entry name" value="NUCLEAR_REC_DBD_2"/>
    <property type="match status" value="1"/>
</dbReference>
<sequence>MTSPSPRIQIISTDSAVASPQRIQIVTDQQTGQKIQIVTAVDASGSPKQQFILTSPDGAGTGKVILASPETSSAKQLIFTTSDNLVPGRIQIVTDSASVERLLGKTDVQRPQVVEYCVVCGDKASGRHYGAVSCEGCKGFFKRSVRKNLTYSCRSNQDCIINKHHRNRCQFCRLKKCLEMGMKMESVQSERKPFDVQREKPSNCAASTEKIYIRKDLRSPLIATPTFVADKDGARQTGLLDPGMLVNIQQPLIREDGTVLLATDSKAETSQGALGTLANVVTSLANLSESLNNGDTSEIQPEDQSASEITRAFDTLAKALNTTDSSSSPSLADGIDTSGGGSIHVISRDQSTPIIEVEGPLLSDTHVTFKLTMPSPMPEYLNVHYICESASRLLFLSMHWARSIPAFQALGQDCNTSLVRACWNELFTLGLAQCAQVMSLSTILAAIVNHLQNSIQEDKLSGDRIKQVMEHIWKLQEFCNSMAKLDIDGYEYAYLKAIVLFSPDHPGLTSTSQIEKFQEKAQMELQDYVQKTYSEDTYRLARILVRLPALRLMSSNITEELFFTGLIGNVSIDSIIPYILKMETAEYNGQITGASL</sequence>
<accession>P49116</accession>
<accession>A8K3H5</accession>
<accession>B6ZGT8</accession>
<accession>P55092</accession>
<organism>
    <name type="scientific">Homo sapiens</name>
    <name type="common">Human</name>
    <dbReference type="NCBI Taxonomy" id="9606"/>
    <lineage>
        <taxon>Eukaryota</taxon>
        <taxon>Metazoa</taxon>
        <taxon>Chordata</taxon>
        <taxon>Craniata</taxon>
        <taxon>Vertebrata</taxon>
        <taxon>Euteleostomi</taxon>
        <taxon>Mammalia</taxon>
        <taxon>Eutheria</taxon>
        <taxon>Euarchontoglires</taxon>
        <taxon>Primates</taxon>
        <taxon>Haplorrhini</taxon>
        <taxon>Catarrhini</taxon>
        <taxon>Hominidae</taxon>
        <taxon>Homo</taxon>
    </lineage>
</organism>
<proteinExistence type="evidence at protein level"/>
<name>NR2C2_HUMAN</name>
<comment type="function">
    <text evidence="1 5 6 9 12 13">Orphan nuclear receptor that can act as a repressor or activator of transcription. An important repressor of nuclear receptor signaling pathways such as retinoic acid receptor, retinoid X, vitamin D3 receptor, thyroid hormone receptor and estrogen receptor pathways. May regulate gene expression during the late phase of spermatogenesis. Together with NR2C1, forms the core of the DRED (direct repeat erythroid-definitive) complex that represses embryonic and fetal globin transcription including that of GATA1. Binds to hormone response elements (HREs) consisting of two 5'-AGGTCA-3' half site direct repeat consensus sequences. Plays a fundamental role in early embryonic development and embryonic stem cells. Required for normal spermatogenesis and cerebellum development. Appears to be important for neurodevelopmentally regulated behavior (By similarity). Activates transcriptional activity of LHCG. Antagonist of PPARA-mediated transactivation.</text>
</comment>
<comment type="subunit">
    <text evidence="2 7 8 11 13">Homodimer; can bind DNA as homodimer (By similarity). Heterodimer; binds DNA as a heterodimer with NR2C1 required for chromatin remodeling and for binding to promoter regions such as globin DR1 repeats. Interacts with PCAF; the interaction preferentially occurs on the non-phosphorylated form and induces NR2C2-mediated transactivation activity and does not require the ligand-binding domain (By similarity). Interacts (MAPK-mediated phosphorylated form) with NRIP1; the interaction promotes repression of NR2C2-mediated activity (PubMed:9556573). Interacts with NR2C2AP; the interaction represses selective NR2C2-mediated transcriptional activity (PubMed:12486131). Interacts with NLRP10 (PubMed:22672233). Interacts (via ligand-binding region) with transcriptional corepressor JAZF1; the interaction promotes NR2C2-mediated transcriptional repression (PubMed:15302918).</text>
</comment>
<comment type="interaction">
    <interactant intactId="EBI-2652582">
        <id>P49116</id>
    </interactant>
    <interactant intactId="EBI-11023753">
        <id>Q86VZ6</id>
        <label>JAZF1</label>
    </interactant>
    <organismsDiffer>false</organismsDiffer>
    <experiments>10</experiments>
</comment>
<comment type="interaction">
    <interactant intactId="EBI-20709881">
        <id>P49116-2</id>
    </interactant>
    <interactant intactId="EBI-10260040">
        <id>Q86WQ0</id>
        <label>NR2C2AP</label>
    </interactant>
    <organismsDiffer>false</organismsDiffer>
    <experiments>5</experiments>
</comment>
<comment type="subcellular location">
    <subcellularLocation>
        <location evidence="3 6 8">Nucleus</location>
    </subcellularLocation>
</comment>
<comment type="alternative products">
    <event type="alternative splicing"/>
    <isoform>
        <id>P49116-1</id>
        <name>1</name>
        <sequence type="displayed"/>
    </isoform>
    <isoform>
        <id>P49116-2</id>
        <name>2</name>
        <sequence type="described" ref="VSP_039522"/>
    </isoform>
</comment>
<comment type="developmental stage">
    <text>Transiently repressed during the meiotic phase of spermatogenesis.</text>
</comment>
<comment type="induction">
    <text evidence="10">Induced by oxidative stress via FOXO3 activation.</text>
</comment>
<comment type="PTM">
    <text evidence="1">Phosphorylation on Ser-19 and Ser-68 is an important regulator of NR2C2-mediated transcriptional activity. Phosphorylation on these residues recruits the corepressor, NRIP1, leading to transcripional repression, whereas the non-phosphorylated form preferentially recruits the coactivator, PCAF (By similarity).</text>
</comment>
<comment type="similarity">
    <text evidence="15">Belongs to the nuclear hormone receptor family. NR2 subfamily.</text>
</comment>